<organism>
    <name type="scientific">Enterobacteria phage T4</name>
    <name type="common">Bacteriophage T4</name>
    <dbReference type="NCBI Taxonomy" id="10665"/>
    <lineage>
        <taxon>Viruses</taxon>
        <taxon>Duplodnaviria</taxon>
        <taxon>Heunggongvirae</taxon>
        <taxon>Uroviricota</taxon>
        <taxon>Caudoviricetes</taxon>
        <taxon>Straboviridae</taxon>
        <taxon>Tevenvirinae</taxon>
        <taxon>Tequatrovirus</taxon>
    </lineage>
</organism>
<dbReference type="EMBL" id="Y00122">
    <property type="protein sequence ID" value="CAA68313.1"/>
    <property type="molecule type" value="Genomic_DNA"/>
</dbReference>
<dbReference type="EMBL" id="AF158101">
    <property type="protein sequence ID" value="AAD42498.1"/>
    <property type="molecule type" value="Genomic_DNA"/>
</dbReference>
<dbReference type="PIR" id="H29284">
    <property type="entry name" value="Z9BPT9"/>
</dbReference>
<dbReference type="RefSeq" id="NP_049687.1">
    <property type="nucleotide sequence ID" value="NC_000866.4"/>
</dbReference>
<dbReference type="SMR" id="P07076"/>
<dbReference type="GeneID" id="1258556"/>
<dbReference type="KEGG" id="vg:1258556"/>
<dbReference type="OrthoDB" id="23392at10239"/>
<dbReference type="Proteomes" id="UP000009087">
    <property type="component" value="Segment"/>
</dbReference>
<proteinExistence type="predicted"/>
<reference key="1">
    <citation type="journal article" date="1987" name="Nucleic Acids Res.">
        <title>Nucleotide sequence and primary structures of gene products coded for by the T4 genome between map positions 48.266 kb and 39.166 kb.</title>
        <authorList>
            <person name="Tomaschewski J."/>
            <person name="Rueger W."/>
        </authorList>
    </citation>
    <scope>NUCLEOTIDE SEQUENCE [GENOMIC DNA]</scope>
    <source>
        <strain>C</strain>
    </source>
</reference>
<reference key="2">
    <citation type="journal article" date="2003" name="Microbiol. Mol. Biol. Rev.">
        <title>Bacteriophage T4 genome.</title>
        <authorList>
            <person name="Miller E.S."/>
            <person name="Kutter E."/>
            <person name="Mosig G."/>
            <person name="Arisaka F."/>
            <person name="Kunisawa T."/>
            <person name="Ruger W."/>
        </authorList>
    </citation>
    <scope>NUCLEOTIDE SEQUENCE [LARGE SCALE GENOMIC DNA]</scope>
</reference>
<feature type="chain" id="PRO_0000165111" description="Uncharacterized 7.9 kDa protein in Gp55-nrdG intergenic region">
    <location>
        <begin position="1"/>
        <end position="70"/>
    </location>
</feature>
<sequence length="70" mass="7912">MYKFRKGLADFLTTVTFFLFMAVGAIFLIPFIAIFFVISLISPEKGLSSSEFNERLDKITNKLNAALSKE</sequence>
<name>Y04H_BPT4</name>
<gene>
    <name type="primary">y04H</name>
    <name type="synonym">55.8</name>
</gene>
<accession>P07076</accession>
<organismHost>
    <name type="scientific">Escherichia coli</name>
    <dbReference type="NCBI Taxonomy" id="562"/>
</organismHost>
<keyword id="KW-1185">Reference proteome</keyword>
<protein>
    <recommendedName>
        <fullName>Uncharacterized 7.9 kDa protein in Gp55-nrdG intergenic region</fullName>
    </recommendedName>
</protein>